<proteinExistence type="evidence at protein level"/>
<organism>
    <name type="scientific">Vargula hilgendorfii</name>
    <name type="common">Sea firefly</name>
    <name type="synonym">Cypridina hilgendorfii</name>
    <dbReference type="NCBI Taxonomy" id="6674"/>
    <lineage>
        <taxon>Eukaryota</taxon>
        <taxon>Metazoa</taxon>
        <taxon>Ecdysozoa</taxon>
        <taxon>Arthropoda</taxon>
        <taxon>Crustacea</taxon>
        <taxon>Oligostraca</taxon>
        <taxon>Ostracoda</taxon>
        <taxon>Myodocopa</taxon>
        <taxon>Myodocopida</taxon>
        <taxon>Cypridinoidea</taxon>
        <taxon>Cypridinidae</taxon>
        <taxon>Vargula</taxon>
    </lineage>
</organism>
<keyword id="KW-0210">Decarboxylase</keyword>
<keyword id="KW-0903">Direct protein sequencing</keyword>
<keyword id="KW-1015">Disulfide bond</keyword>
<keyword id="KW-0325">Glycoprotein</keyword>
<keyword id="KW-0455">Luminescence</keyword>
<keyword id="KW-0456">Lyase</keyword>
<keyword id="KW-0503">Monooxygenase</keyword>
<keyword id="KW-0560">Oxidoreductase</keyword>
<keyword id="KW-0599">Photoprotein</keyword>
<keyword id="KW-0677">Repeat</keyword>
<keyword id="KW-0732">Signal</keyword>
<protein>
    <recommendedName>
        <fullName>Luciferin 2-monooxygenase</fullName>
        <ecNumber>1.13.12.6</ecNumber>
    </recommendedName>
    <alternativeName>
        <fullName>Cypridina-type luciferase</fullName>
    </alternativeName>
</protein>
<name>LUCI_VARHI</name>
<accession>P17554</accession>
<dbReference type="EC" id="1.13.12.6"/>
<dbReference type="EMBL" id="M25666">
    <property type="protein sequence ID" value="AAA30332.1"/>
    <property type="molecule type" value="mRNA"/>
</dbReference>
<dbReference type="PIR" id="A33723">
    <property type="entry name" value="A33723"/>
</dbReference>
<dbReference type="SMR" id="P17554"/>
<dbReference type="BRENDA" id="1.13.12.6">
    <property type="organism ID" value="1799"/>
</dbReference>
<dbReference type="GO" id="GO:0031012">
    <property type="term" value="C:extracellular matrix"/>
    <property type="evidence" value="ECO:0007669"/>
    <property type="project" value="TreeGrafter"/>
</dbReference>
<dbReference type="GO" id="GO:0005615">
    <property type="term" value="C:extracellular space"/>
    <property type="evidence" value="ECO:0007669"/>
    <property type="project" value="TreeGrafter"/>
</dbReference>
<dbReference type="GO" id="GO:0016831">
    <property type="term" value="F:carboxy-lyase activity"/>
    <property type="evidence" value="ECO:0007669"/>
    <property type="project" value="UniProtKB-KW"/>
</dbReference>
<dbReference type="GO" id="GO:0047712">
    <property type="term" value="F:Cypridina-luciferin 2-monooxygenase activity"/>
    <property type="evidence" value="ECO:0007669"/>
    <property type="project" value="UniProtKB-EC"/>
</dbReference>
<dbReference type="GO" id="GO:0008218">
    <property type="term" value="P:bioluminescence"/>
    <property type="evidence" value="ECO:0007669"/>
    <property type="project" value="UniProtKB-KW"/>
</dbReference>
<dbReference type="InterPro" id="IPR050780">
    <property type="entry name" value="Mucin_vWF_Thrombospondin_sf"/>
</dbReference>
<dbReference type="InterPro" id="IPR001846">
    <property type="entry name" value="VWF_type-D"/>
</dbReference>
<dbReference type="PANTHER" id="PTHR11339">
    <property type="entry name" value="EXTRACELLULAR MATRIX GLYCOPROTEIN RELATED"/>
    <property type="match status" value="1"/>
</dbReference>
<dbReference type="PANTHER" id="PTHR11339:SF373">
    <property type="entry name" value="VWFD DOMAIN-CONTAINING PROTEIN"/>
    <property type="match status" value="1"/>
</dbReference>
<dbReference type="Pfam" id="PF00094">
    <property type="entry name" value="VWD"/>
    <property type="match status" value="2"/>
</dbReference>
<dbReference type="SMART" id="SM00216">
    <property type="entry name" value="VWD"/>
    <property type="match status" value="2"/>
</dbReference>
<dbReference type="PROSITE" id="PS51233">
    <property type="entry name" value="VWFD"/>
    <property type="match status" value="2"/>
</dbReference>
<evidence type="ECO:0000255" key="1"/>
<evidence type="ECO:0000255" key="2">
    <source>
        <dbReference type="PROSITE-ProRule" id="PRU00580"/>
    </source>
</evidence>
<comment type="catalytic activity">
    <reaction>
        <text>Cypridina luciferin + O2 = oxidized Cypridina luciferin + hnu + CO2</text>
        <dbReference type="Rhea" id="RHEA:22760"/>
        <dbReference type="ChEBI" id="CHEBI:15379"/>
        <dbReference type="ChEBI" id="CHEBI:16526"/>
        <dbReference type="ChEBI" id="CHEBI:30212"/>
        <dbReference type="ChEBI" id="CHEBI:58006"/>
        <dbReference type="ChEBI" id="CHEBI:58059"/>
        <dbReference type="EC" id="1.13.12.6"/>
    </reaction>
</comment>
<comment type="PTM">
    <text>The cysteine residues presumably exist in intramolecular disulfide bridges.</text>
</comment>
<comment type="PTM">
    <text>The N-terminus is blocked.</text>
</comment>
<comment type="miscellaneous">
    <text>60 kcal/mol are required for the blue emission of light (460 nm) due to the oxidation of luciferin via a dioxetanone intermediate, in which the excited state oxyluciferin bound to luciferase is the emitter.</text>
</comment>
<feature type="signal peptide" evidence="1">
    <location>
        <begin position="1"/>
        <end position="11"/>
    </location>
</feature>
<feature type="chain" id="PRO_0000021626" description="Luciferin 2-monooxygenase">
    <location>
        <begin position="12"/>
        <end position="555"/>
    </location>
</feature>
<feature type="domain" description="VWFD 1" evidence="2">
    <location>
        <begin position="80"/>
        <end position="266"/>
    </location>
</feature>
<feature type="domain" description="VWFD 2" evidence="2">
    <location>
        <begin position="319"/>
        <end position="494"/>
    </location>
</feature>
<feature type="glycosylation site" description="N-linked (GlcNAc...) asparagine" evidence="1">
    <location>
        <position position="186"/>
    </location>
</feature>
<feature type="glycosylation site" description="N-linked (GlcNAc...) asparagine" evidence="1">
    <location>
        <position position="408"/>
    </location>
</feature>
<feature type="disulfide bond" evidence="2">
    <location>
        <begin position="82"/>
        <end position="222"/>
    </location>
</feature>
<feature type="disulfide bond" evidence="2">
    <location>
        <begin position="321"/>
        <end position="454"/>
    </location>
</feature>
<feature type="disulfide bond" evidence="2">
    <location>
        <begin position="343"/>
        <end position="493"/>
    </location>
</feature>
<feature type="disulfide bond" evidence="2">
    <location>
        <begin position="352"/>
        <end position="451"/>
    </location>
</feature>
<reference key="1">
    <citation type="journal article" date="1989" name="Proc. Natl. Acad. Sci. U.S.A.">
        <title>Cloning and expression of cDNA for the luciferase from the marine ostracod Vargula hilgendorfii.</title>
        <authorList>
            <person name="Thompson E.M."/>
            <person name="Nagata S."/>
            <person name="Tsuji F.I."/>
        </authorList>
    </citation>
    <scope>NUCLEOTIDE SEQUENCE [MRNA]</scope>
    <scope>PARTIAL PROTEIN SEQUENCE</scope>
</reference>
<sequence>MKIIILSVILAYCVTDNCQDACPVEAEPPSSTPTVPTSCEAKEGECIDTRCATCKRDILSDGLCENKPGKTCCRMCQYVIECRVEAAGYFRTFYGKRFNFQEPGKYVLARGTKGGDWSVTLTMENLDGQKGAVLTKTTLEVAGDVIDITQATADPITVNGGADPVIANPFTIGEVTIAVVEIPGFNITVIEFFKLIVIDILGGRSVRIAPDTANKGLISGICGNLEMNDADDFTTDADQLAIQPNINKEFDGCPFYGNPSDIEYCKGLMEPYRAVCRNNINFYYYTLSCAFAYCMGGEERAKHVLFDYVETCAAPETRGTCVLSGHTFYDTFDKARYQFQGPCKEILMAADCYWNTWDVKVSHRDVESYTEVEKVTIRKQSTVVDLIVDGKQVKVGGVDVSIPYSSENTSIYWQDGDILTTAILPEALVVKFNFKQLLVVHIRDPFDGKTCGICGNYNQDSTDDFFDAEGACALTPNPPGCTEEQKPEAERLCNNLFDSSIDEKCNVCYKPDRIARCMYEYCLRGQQGFCDHAWEFKKECYIKHGDTLEVPPECQ</sequence>